<proteinExistence type="inferred from homology"/>
<feature type="chain" id="PRO_1000062180" description="Isocitrate dehydrogenase kinase/phosphatase">
    <location>
        <begin position="1"/>
        <end position="584"/>
    </location>
</feature>
<feature type="active site" evidence="1">
    <location>
        <position position="371"/>
    </location>
</feature>
<feature type="binding site" evidence="1">
    <location>
        <begin position="315"/>
        <end position="321"/>
    </location>
    <ligand>
        <name>ATP</name>
        <dbReference type="ChEBI" id="CHEBI:30616"/>
    </ligand>
</feature>
<feature type="binding site" evidence="1">
    <location>
        <position position="336"/>
    </location>
    <ligand>
        <name>ATP</name>
        <dbReference type="ChEBI" id="CHEBI:30616"/>
    </ligand>
</feature>
<dbReference type="EC" id="2.7.11.5" evidence="1"/>
<dbReference type="EC" id="3.1.3.-" evidence="1"/>
<dbReference type="EMBL" id="CP000826">
    <property type="protein sequence ID" value="ABV43595.1"/>
    <property type="molecule type" value="Genomic_DNA"/>
</dbReference>
<dbReference type="SMR" id="A8GKF5"/>
<dbReference type="STRING" id="399741.Spro_4501"/>
<dbReference type="KEGG" id="spe:Spro_4501"/>
<dbReference type="eggNOG" id="COG4579">
    <property type="taxonomic scope" value="Bacteria"/>
</dbReference>
<dbReference type="HOGENOM" id="CLU_033804_1_1_6"/>
<dbReference type="OrthoDB" id="5287793at2"/>
<dbReference type="GO" id="GO:0005737">
    <property type="term" value="C:cytoplasm"/>
    <property type="evidence" value="ECO:0007669"/>
    <property type="project" value="UniProtKB-SubCell"/>
</dbReference>
<dbReference type="GO" id="GO:0008772">
    <property type="term" value="F:[isocitrate dehydrogenase (NADP+)] kinase activity"/>
    <property type="evidence" value="ECO:0007669"/>
    <property type="project" value="UniProtKB-UniRule"/>
</dbReference>
<dbReference type="GO" id="GO:0016208">
    <property type="term" value="F:AMP binding"/>
    <property type="evidence" value="ECO:0007669"/>
    <property type="project" value="TreeGrafter"/>
</dbReference>
<dbReference type="GO" id="GO:0005524">
    <property type="term" value="F:ATP binding"/>
    <property type="evidence" value="ECO:0007669"/>
    <property type="project" value="UniProtKB-UniRule"/>
</dbReference>
<dbReference type="GO" id="GO:0004721">
    <property type="term" value="F:phosphoprotein phosphatase activity"/>
    <property type="evidence" value="ECO:0007669"/>
    <property type="project" value="UniProtKB-KW"/>
</dbReference>
<dbReference type="GO" id="GO:0004674">
    <property type="term" value="F:protein serine/threonine kinase activity"/>
    <property type="evidence" value="ECO:0007669"/>
    <property type="project" value="UniProtKB-KW"/>
</dbReference>
<dbReference type="GO" id="GO:0006006">
    <property type="term" value="P:glucose metabolic process"/>
    <property type="evidence" value="ECO:0007669"/>
    <property type="project" value="InterPro"/>
</dbReference>
<dbReference type="GO" id="GO:0006097">
    <property type="term" value="P:glyoxylate cycle"/>
    <property type="evidence" value="ECO:0007669"/>
    <property type="project" value="UniProtKB-UniRule"/>
</dbReference>
<dbReference type="GO" id="GO:0006099">
    <property type="term" value="P:tricarboxylic acid cycle"/>
    <property type="evidence" value="ECO:0007669"/>
    <property type="project" value="UniProtKB-UniRule"/>
</dbReference>
<dbReference type="HAMAP" id="MF_00747">
    <property type="entry name" value="AceK"/>
    <property type="match status" value="1"/>
</dbReference>
<dbReference type="InterPro" id="IPR046855">
    <property type="entry name" value="AceK_kinase"/>
</dbReference>
<dbReference type="InterPro" id="IPR046854">
    <property type="entry name" value="AceK_regulatory"/>
</dbReference>
<dbReference type="InterPro" id="IPR010452">
    <property type="entry name" value="Isocitrate_DH_AceK"/>
</dbReference>
<dbReference type="NCBIfam" id="NF002804">
    <property type="entry name" value="PRK02946.1"/>
    <property type="match status" value="1"/>
</dbReference>
<dbReference type="PANTHER" id="PTHR39559">
    <property type="match status" value="1"/>
</dbReference>
<dbReference type="PANTHER" id="PTHR39559:SF1">
    <property type="entry name" value="ISOCITRATE DEHYDROGENASE KINASE_PHOSPHATASE"/>
    <property type="match status" value="1"/>
</dbReference>
<dbReference type="Pfam" id="PF06315">
    <property type="entry name" value="AceK_kinase"/>
    <property type="match status" value="1"/>
</dbReference>
<dbReference type="Pfam" id="PF20423">
    <property type="entry name" value="AceK_regulatory"/>
    <property type="match status" value="1"/>
</dbReference>
<dbReference type="PIRSF" id="PIRSF000719">
    <property type="entry name" value="AceK"/>
    <property type="match status" value="1"/>
</dbReference>
<protein>
    <recommendedName>
        <fullName evidence="1">Isocitrate dehydrogenase kinase/phosphatase</fullName>
        <shortName evidence="1">IDH kinase/phosphatase</shortName>
        <shortName evidence="1">IDHK/P</shortName>
        <ecNumber evidence="1">2.7.11.5</ecNumber>
        <ecNumber evidence="1">3.1.3.-</ecNumber>
    </recommendedName>
</protein>
<organism>
    <name type="scientific">Serratia proteamaculans (strain 568)</name>
    <dbReference type="NCBI Taxonomy" id="399741"/>
    <lineage>
        <taxon>Bacteria</taxon>
        <taxon>Pseudomonadati</taxon>
        <taxon>Pseudomonadota</taxon>
        <taxon>Gammaproteobacteria</taxon>
        <taxon>Enterobacterales</taxon>
        <taxon>Yersiniaceae</taxon>
        <taxon>Serratia</taxon>
    </lineage>
</organism>
<accession>A8GKF5</accession>
<evidence type="ECO:0000255" key="1">
    <source>
        <dbReference type="HAMAP-Rule" id="MF_00747"/>
    </source>
</evidence>
<comment type="function">
    <text evidence="1">Bifunctional enzyme which can phosphorylate or dephosphorylate isocitrate dehydrogenase (IDH) on a specific serine residue. This is a regulatory mechanism which enables bacteria to bypass the Krebs cycle via the glyoxylate shunt in response to the source of carbon. When bacteria are grown on glucose, IDH is fully active and unphosphorylated, but when grown on acetate or ethanol, the activity of IDH declines drastically concomitant with its phosphorylation.</text>
</comment>
<comment type="catalytic activity">
    <reaction evidence="1">
        <text>L-seryl-[isocitrate dehydrogenase] + ATP = O-phospho-L-seryl-[isocitrate dehydrogenase] + ADP + H(+)</text>
        <dbReference type="Rhea" id="RHEA:43540"/>
        <dbReference type="Rhea" id="RHEA-COMP:10605"/>
        <dbReference type="Rhea" id="RHEA-COMP:10606"/>
        <dbReference type="ChEBI" id="CHEBI:15378"/>
        <dbReference type="ChEBI" id="CHEBI:29999"/>
        <dbReference type="ChEBI" id="CHEBI:30616"/>
        <dbReference type="ChEBI" id="CHEBI:83421"/>
        <dbReference type="ChEBI" id="CHEBI:456216"/>
        <dbReference type="EC" id="2.7.11.5"/>
    </reaction>
</comment>
<comment type="subcellular location">
    <subcellularLocation>
        <location evidence="1">Cytoplasm</location>
    </subcellularLocation>
</comment>
<comment type="similarity">
    <text evidence="1">Belongs to the AceK family.</text>
</comment>
<name>ACEK_SERP5</name>
<gene>
    <name evidence="1" type="primary">aceK</name>
    <name type="ordered locus">Spro_4501</name>
</gene>
<sequence>MAAKLELLIAQTILQGFDAQYGRFLEVTAGAQQRFERADWPAVQQAMKKRIHLYDHHVGLVVEQLKCITGQQYFDADFPSRVKAVYTDLLPEYPRFEIAESFFNSVYCRLFRHRDLTPEKLFVFSSQPEGRFRDIPRPLSRDFTANGDVSAMLYNLLTDLPLRLPWENLSRDIDYITLALQQSFSAQQLAGATFQIANELFYRNKAAWLVGKLRVADRVYPFLLPIHHSDSGALFIDTCLTSKAEASIVFGFARSYFMVYAPLPAAMVEWLREILPGKTTAELYMAIGCQKHGKTECYREYLTFMSGSQEQFIIAPGVKGMVMLVFTLPSFDRVFKVIKDEFAPQKEVTQAQVMACYQLVKEHDRVGRMADTQEYENFVVDKARLSPELLAELQREVPDKLEDLGDRIAIRHLYMERRMTPLNLYLEQADEQQMRDAIEEYGNAIKQLAAANIFPGDMLFKNFGVTRHGRVVFYDYDEICYMTEVNFRDIPPPRYPEDELASEPWYSVSPNDVFPEEFRHFLCGDRRIRQVFEEMHRDLFEADYWRGLQQRIRDGHVEDVFAYRKKRRFSQRSGAALPATSATA</sequence>
<reference key="1">
    <citation type="submission" date="2007-09" db="EMBL/GenBank/DDBJ databases">
        <title>Complete sequence of chromosome of Serratia proteamaculans 568.</title>
        <authorList>
            <consortium name="US DOE Joint Genome Institute"/>
            <person name="Copeland A."/>
            <person name="Lucas S."/>
            <person name="Lapidus A."/>
            <person name="Barry K."/>
            <person name="Glavina del Rio T."/>
            <person name="Dalin E."/>
            <person name="Tice H."/>
            <person name="Pitluck S."/>
            <person name="Chain P."/>
            <person name="Malfatti S."/>
            <person name="Shin M."/>
            <person name="Vergez L."/>
            <person name="Schmutz J."/>
            <person name="Larimer F."/>
            <person name="Land M."/>
            <person name="Hauser L."/>
            <person name="Kyrpides N."/>
            <person name="Kim E."/>
            <person name="Taghavi S."/>
            <person name="Newman L."/>
            <person name="Vangronsveld J."/>
            <person name="van der Lelie D."/>
            <person name="Richardson P."/>
        </authorList>
    </citation>
    <scope>NUCLEOTIDE SEQUENCE [LARGE SCALE GENOMIC DNA]</scope>
    <source>
        <strain>568</strain>
    </source>
</reference>
<keyword id="KW-0067">ATP-binding</keyword>
<keyword id="KW-0963">Cytoplasm</keyword>
<keyword id="KW-0329">Glyoxylate bypass</keyword>
<keyword id="KW-0378">Hydrolase</keyword>
<keyword id="KW-0418">Kinase</keyword>
<keyword id="KW-0547">Nucleotide-binding</keyword>
<keyword id="KW-0904">Protein phosphatase</keyword>
<keyword id="KW-0723">Serine/threonine-protein kinase</keyword>
<keyword id="KW-0808">Transferase</keyword>
<keyword id="KW-0816">Tricarboxylic acid cycle</keyword>